<accession>P48995</accession>
<accession>Q14CE4</accession>
<keyword id="KW-0002">3D-structure</keyword>
<keyword id="KW-0025">Alternative splicing</keyword>
<keyword id="KW-0040">ANK repeat</keyword>
<keyword id="KW-0106">Calcium</keyword>
<keyword id="KW-0107">Calcium channel</keyword>
<keyword id="KW-0109">Calcium transport</keyword>
<keyword id="KW-1003">Cell membrane</keyword>
<keyword id="KW-1015">Disulfide bond</keyword>
<keyword id="KW-0407">Ion channel</keyword>
<keyword id="KW-0406">Ion transport</keyword>
<keyword id="KW-0472">Membrane</keyword>
<keyword id="KW-0479">Metal-binding</keyword>
<keyword id="KW-0597">Phosphoprotein</keyword>
<keyword id="KW-1267">Proteomics identification</keyword>
<keyword id="KW-1185">Reference proteome</keyword>
<keyword id="KW-0677">Repeat</keyword>
<keyword id="KW-0812">Transmembrane</keyword>
<keyword id="KW-1133">Transmembrane helix</keyword>
<keyword id="KW-0813">Transport</keyword>
<keyword id="KW-0862">Zinc</keyword>
<proteinExistence type="evidence at protein level"/>
<evidence type="ECO:0000250" key="1">
    <source>
        <dbReference type="UniProtKB" id="Q61056"/>
    </source>
</evidence>
<evidence type="ECO:0000256" key="2">
    <source>
        <dbReference type="SAM" id="MobiDB-lite"/>
    </source>
</evidence>
<evidence type="ECO:0000269" key="3">
    <source>
    </source>
</evidence>
<evidence type="ECO:0000269" key="4">
    <source>
    </source>
</evidence>
<evidence type="ECO:0000269" key="5">
    <source>
    </source>
</evidence>
<evidence type="ECO:0000269" key="6">
    <source>
    </source>
</evidence>
<evidence type="ECO:0000269" key="7">
    <source>
    </source>
</evidence>
<evidence type="ECO:0000269" key="8">
    <source>
    </source>
</evidence>
<evidence type="ECO:0000269" key="9">
    <source>
    </source>
</evidence>
<evidence type="ECO:0000269" key="10">
    <source>
    </source>
</evidence>
<evidence type="ECO:0000269" key="11">
    <source>
    </source>
</evidence>
<evidence type="ECO:0000269" key="12">
    <source>
    </source>
</evidence>
<evidence type="ECO:0000269" key="13">
    <source>
    </source>
</evidence>
<evidence type="ECO:0000269" key="14">
    <source>
    </source>
</evidence>
<evidence type="ECO:0000269" key="15">
    <source>
    </source>
</evidence>
<evidence type="ECO:0000303" key="16">
    <source>
    </source>
</evidence>
<evidence type="ECO:0000303" key="17">
    <source>
    </source>
</evidence>
<evidence type="ECO:0000303" key="18">
    <source>
    </source>
</evidence>
<evidence type="ECO:0000305" key="19"/>
<evidence type="ECO:0007744" key="20">
    <source>
        <dbReference type="PDB" id="8WPL"/>
    </source>
</evidence>
<evidence type="ECO:0007744" key="21">
    <source>
        <dbReference type="PDB" id="8WPM"/>
    </source>
</evidence>
<evidence type="ECO:0007829" key="22">
    <source>
        <dbReference type="PDB" id="8WPL"/>
    </source>
</evidence>
<evidence type="ECO:0007829" key="23">
    <source>
        <dbReference type="PDB" id="8WPM"/>
    </source>
</evidence>
<protein>
    <recommendedName>
        <fullName>Short transient receptor potential channel 1</fullName>
        <shortName>TrpC1</shortName>
    </recommendedName>
    <alternativeName>
        <fullName>Transient receptor protein 1</fullName>
        <shortName>TRP-1</shortName>
    </alternativeName>
</protein>
<sequence>MMAALYPSTDLSGASSSSLPSSPSSSSPNEVMALKDVREVKEENTLNEKLFLLACDKGDYYMVKKILEENSSGDLNINCVDVLGRNAVTITIENENLDILQLLLDYGCQSADALLVAIDSEVVGAVDILLNHRPKRSSRPTIVKLMERIQNPEYSTTMDVAPVILAAHRNNYEILTMLLKQDVSLPKPHAVGCECTLCSAKNKKDSLRHSRFRLDIYRCLASPALIMLTEEDPILRAFELSADLKELSLVEVEFRNDYEELARQCKMFAKDLLAQARNSRELEVILNHTSSDEPLDKRGLLEERMNLSRLKLAIKYNQKEFVSQSNCQQFLNTVWFGQMSGYRRKPTCKKIMTVLTVGIFWPVLSLCYLIAPKSQFGRIIHTPFMKFIIHGASYFTFLLLLNLYSLVYNEDKKNTMGPALERIDYLLILWIIGMIWSDIKRLWYEGLEDFLEESRNQLSFVMNSLYLATFALKVVAHNKFHDFADRKDWDAFHPTLVAEGLFAFANVLSYLRLFFMYTTSSILGPLQISMGQMLQDFGKFLGMFLLVLFSFTIGLTQLYDKGYTSKEQKDCVGIFCEQQSNDTFHSFIGTCFALFWYIFSLAHVAIFVTRFSYGEELQSFVGAVIVGTYNVVVVIVLTKLLVAMLHKSFQLIANHEDKEWKFARAKLWLSYFDDKCTLPPPFNIIPSPKTICYMISSLSKWICSHTSKGKVKRQNSLKEWRNLKQKRDENYQKVMCCLVHRYLTSMRQKMQSTDQATVENLNELRQDLSKFRNEIRDLLGFRTSKYAMFYPRN</sequence>
<gene>
    <name type="primary">TRPC1</name>
    <name type="synonym">TRP1</name>
</gene>
<name>TRPC1_HUMAN</name>
<reference key="1">
    <citation type="journal article" date="1995" name="FEBS Lett.">
        <title>Molecular cloning of a widely expressed human homologue for the Drosophila trp gene.</title>
        <authorList>
            <person name="Zhu X."/>
            <person name="Chu P.B."/>
            <person name="Peyton M."/>
            <person name="Birnbaumer L."/>
        </authorList>
    </citation>
    <scope>NUCLEOTIDE SEQUENCE [MRNA] (ISOFORM LONG)</scope>
    <scope>ALTERNATIVE SPLICING (ISOFORM SHORT)</scope>
</reference>
<reference key="2">
    <citation type="journal article" date="1995" name="Proc. Natl. Acad. Sci. U.S.A.">
        <title>TRPC1, a human homolog of a Drosophila store-operated channel.</title>
        <authorList>
            <person name="Wes P.D."/>
            <person name="Chevesich J."/>
            <person name="Jeromin A."/>
            <person name="Rosenberg C."/>
            <person name="Stetten G."/>
            <person name="Montell C."/>
        </authorList>
    </citation>
    <scope>NUCLEOTIDE SEQUENCE [MRNA] (ISOFORM SHORT)</scope>
    <source>
        <tissue>Brain</tissue>
    </source>
</reference>
<reference key="3">
    <citation type="journal article" date="1996" name="Neuron">
        <title>Cloning and functional expression of a human Ca2+-permeable cation channel activated by calcium store depletion.</title>
        <authorList>
            <person name="Zitt C."/>
            <person name="Zobel A."/>
            <person name="Obukhov A.G."/>
            <person name="Harteneck C."/>
            <person name="Kalkbrenner F."/>
            <person name="Lueckhoff A."/>
            <person name="Schultz G."/>
        </authorList>
    </citation>
    <scope>NUCLEOTIDE SEQUENCE [MRNA] (ISOFORM SHORT)</scope>
    <scope>FUNCTION (ISOFORM SHORT)</scope>
    <scope>TRANSPORTER ACTIVITY (ISOFORM SHORT)</scope>
    <scope>ACTIVITY REGULATION</scope>
    <source>
        <tissue>Brain</tissue>
    </source>
</reference>
<reference key="4">
    <citation type="submission" date="2005-09" db="EMBL/GenBank/DDBJ databases">
        <authorList>
            <person name="Mural R.J."/>
            <person name="Istrail S."/>
            <person name="Sutton G.G."/>
            <person name="Florea L."/>
            <person name="Halpern A.L."/>
            <person name="Mobarry C.M."/>
            <person name="Lippert R."/>
            <person name="Walenz B."/>
            <person name="Shatkay H."/>
            <person name="Dew I."/>
            <person name="Miller J.R."/>
            <person name="Flanigan M.J."/>
            <person name="Edwards N.J."/>
            <person name="Bolanos R."/>
            <person name="Fasulo D."/>
            <person name="Halldorsson B.V."/>
            <person name="Hannenhalli S."/>
            <person name="Turner R."/>
            <person name="Yooseph S."/>
            <person name="Lu F."/>
            <person name="Nusskern D.R."/>
            <person name="Shue B.C."/>
            <person name="Zheng X.H."/>
            <person name="Zhong F."/>
            <person name="Delcher A.L."/>
            <person name="Huson D.H."/>
            <person name="Kravitz S.A."/>
            <person name="Mouchard L."/>
            <person name="Reinert K."/>
            <person name="Remington K.A."/>
            <person name="Clark A.G."/>
            <person name="Waterman M.S."/>
            <person name="Eichler E.E."/>
            <person name="Adams M.D."/>
            <person name="Hunkapiller M.W."/>
            <person name="Myers E.W."/>
            <person name="Venter J.C."/>
        </authorList>
    </citation>
    <scope>NUCLEOTIDE SEQUENCE [LARGE SCALE GENOMIC DNA]</scope>
</reference>
<reference key="5">
    <citation type="journal article" date="2004" name="Genome Res.">
        <title>The status, quality, and expansion of the NIH full-length cDNA project: the Mammalian Gene Collection (MGC).</title>
        <authorList>
            <consortium name="The MGC Project Team"/>
        </authorList>
    </citation>
    <scope>NUCLEOTIDE SEQUENCE [LARGE SCALE MRNA] (ISOFORM SHORT)</scope>
</reference>
<reference key="6">
    <citation type="journal article" date="1997" name="Cell">
        <title>Coassembly of TRP and TRPL produces a distinct store-operated conductance.</title>
        <authorList>
            <person name="Xu X.-Z.S."/>
            <person name="Li H.-S."/>
            <person name="Guggino W.B."/>
            <person name="Montell C."/>
        </authorList>
    </citation>
    <scope>INTERACTION WITH TRPC3 (ISOFORM SHORT)</scope>
</reference>
<reference key="7">
    <citation type="journal article" date="2000" name="J. Biol. Chem.">
        <title>Assembly of Trp1 in a signaling complex associated with caveolin-scaffolding lipid raft domains.</title>
        <authorList>
            <person name="Lockwich T.P."/>
            <person name="Liu X."/>
            <person name="Singh B.B."/>
            <person name="Jadlowiec J."/>
            <person name="Weiland S."/>
            <person name="Ambudkar I.S."/>
        </authorList>
    </citation>
    <scope>INTERACTION WITH ITPR3</scope>
</reference>
<reference key="8">
    <citation type="journal article" date="2001" name="Circ. Res.">
        <title>TrpC1 is a membrane-spanning subunit of store-operated Ca(2+) channels in native vascular smooth muscle cells.</title>
        <authorList>
            <person name="Xu S.-Z."/>
            <person name="Beech D.J."/>
        </authorList>
    </citation>
    <scope>FUNCTION</scope>
    <scope>TRANSPORTER ACTIVITY</scope>
    <scope>SUBCELLULAR LOCATION</scope>
</reference>
<reference key="9">
    <citation type="journal article" date="2002" name="Proc. Natl. Acad. Sci. U.S.A.">
        <title>Subunit composition of mammalian transient receptor potential channels in living cells.</title>
        <authorList>
            <person name="Hofmann T."/>
            <person name="Schaefer M."/>
            <person name="Schultz G."/>
            <person name="Gudermann T."/>
        </authorList>
    </citation>
    <scope>SUBUNIT</scope>
</reference>
<reference key="10">
    <citation type="journal article" date="2004" name="J. Biol. Chem.">
        <title>Protein kinase Calpha phosphorylates the TRPC1 channel and regulates store-operated Ca2+ entry in endothelial cells.</title>
        <authorList>
            <person name="Ahmmed G.U."/>
            <person name="Mehta D."/>
            <person name="Vogel S."/>
            <person name="Holinstat M."/>
            <person name="Paria B.C."/>
            <person name="Tiruppathi C."/>
            <person name="Malik A.B."/>
        </authorList>
    </citation>
    <scope>FUNCTION</scope>
    <scope>PHOSPHORYLATION</scope>
    <scope>TRANSPORTER ACTIVITY</scope>
    <scope>ACTIVITY REGULATION</scope>
</reference>
<reference key="11">
    <citation type="journal article" date="2005" name="J. Biol. Chem.">
        <title>MxA, a member of the dynamin superfamily, interacts with the ankyrin-like repeat domain of TRPC.</title>
        <authorList>
            <person name="Lussier M.P."/>
            <person name="Cayouette S."/>
            <person name="Lepage P.K."/>
            <person name="Bernier C.L."/>
            <person name="Francoeur N."/>
            <person name="St-Hilaire M."/>
            <person name="Pinard M."/>
            <person name="Boulay G."/>
        </authorList>
    </citation>
    <scope>INTERACTION WITH MX1</scope>
</reference>
<reference key="12">
    <citation type="journal article" date="2006" name="J. Cell. Physiol.">
        <title>Functional characterization of PKDREJ, a male germ cell-restricted polycystin.</title>
        <authorList>
            <person name="Sutton K.A."/>
            <person name="Jungnickel M.K."/>
            <person name="Ward C.J."/>
            <person name="Harris P.C."/>
            <person name="Florman H.M."/>
        </authorList>
    </citation>
    <scope>INTERACTION WITH PKD2L2</scope>
</reference>
<reference key="13">
    <citation type="journal article" date="2008" name="Cell Calcium">
        <title>RNF24, a new TRPC interacting protein, causes the intracellular retention of TRPC.</title>
        <authorList>
            <person name="Lussier M.P."/>
            <person name="Lepage P.K."/>
            <person name="Bousquet S.M."/>
            <person name="Boulay G."/>
        </authorList>
    </citation>
    <scope>INTERACTION WITH RNF24</scope>
</reference>
<reference key="14">
    <citation type="journal article" date="2009" name="Neuron">
        <title>Peptidyl-prolyl isomerase FKBP52 controls chemotropic guidance of neuronal growth cones via regulation of TRPC1 channel opening.</title>
        <authorList>
            <person name="Shim S."/>
            <person name="Yuan J.P."/>
            <person name="Kim J.Y."/>
            <person name="Zeng W."/>
            <person name="Huang G."/>
            <person name="Milshteyn A."/>
            <person name="Kern D."/>
            <person name="Muallem S."/>
            <person name="Ming G.L."/>
            <person name="Worley P.F."/>
        </authorList>
    </citation>
    <scope>INTERACTION WITH FKBP4</scope>
</reference>
<reference key="15">
    <citation type="journal article" date="2009" name="J. Biol. Chem.">
        <title>The transient receptor potential channels TRPP2 and TRPC1 form a heterotetramer with a 2:2 stoichiometry and an alternating subunit arrangement.</title>
        <authorList>
            <person name="Kobori T."/>
            <person name="Smith G.D."/>
            <person name="Sandford R."/>
            <person name="Edwardson J.M."/>
        </authorList>
    </citation>
    <scope>SUBUNIT</scope>
    <scope>INTERACTION WITH PKD2</scope>
</reference>
<reference key="16">
    <citation type="journal article" date="2009" name="Hum. Mol. Genet.">
        <title>The multimeric structure of polycystin-2 (TRPP2): structural-functional correlates of homo- and hetero-multimers with TRPC1.</title>
        <authorList>
            <person name="Zhang P."/>
            <person name="Luo Y."/>
            <person name="Chasan B."/>
            <person name="Gonzalez-Perrett S."/>
            <person name="Montalbetti N."/>
            <person name="Timpanaro G.A."/>
            <person name="Cantero M.D.R."/>
            <person name="Ramos A.J."/>
            <person name="Goldmann W.H."/>
            <person name="Zhou J."/>
            <person name="Cantiello H.F."/>
        </authorList>
    </citation>
    <scope>SUBUNIT</scope>
    <scope>INTERACTION WITH PKD2</scope>
</reference>
<reference evidence="20 21" key="17">
    <citation type="journal article" date="2025" name="Nat. Struct. Mol. Biol.">
        <title>Cryo-EM structure of the heteromeric TRPC1/TRPC4 channel.</title>
        <authorList>
            <person name="Won J."/>
            <person name="Kim J."/>
            <person name="Kim J."/>
            <person name="Ko J."/>
            <person name="Park C.H."/>
            <person name="Jeong B."/>
            <person name="Lee S.E."/>
            <person name="Jeong H."/>
            <person name="Kim S.H."/>
            <person name="Park H."/>
            <person name="So I."/>
            <person name="Lee H.H."/>
        </authorList>
    </citation>
    <scope>STRUCTURE BY ELECTRON MICROSCOPY (3.04 ANGSTROMS) IN COMPLEXES WITH TRPC4; CALCIUM; ZINC; PHOSPHOLIPID AND INHIBITOR PICO145</scope>
    <scope>FUNCTION</scope>
    <scope>TRANSPORTER ACTIVITY</scope>
    <scope>ACTIVITY REGULATION</scope>
    <scope>SUBUNIT</scope>
    <scope>SUBCELLULAR LOCATION</scope>
    <scope>TOPOLOGY</scope>
    <scope>ANK REPEATS</scope>
    <scope>DISULFIDE BONDS</scope>
    <scope>MUTAGENESIS OF LEU-601; HIS-646 AND LYS-647</scope>
</reference>
<feature type="chain" id="PRO_0000215303" description="Short transient receptor potential channel 1">
    <location>
        <begin position="1"/>
        <end position="793"/>
    </location>
</feature>
<feature type="topological domain" description="Cytoplasmic" evidence="13 20 21">
    <location>
        <begin position="1"/>
        <end position="345"/>
    </location>
</feature>
<feature type="intramembrane region" description="Discontinuously helical; Name=Pre-S1" evidence="13 20 21">
    <location>
        <begin position="346"/>
        <end position="379"/>
    </location>
</feature>
<feature type="topological domain" description="Cytoplasmic" evidence="13 20 21">
    <location>
        <begin position="380"/>
        <end position="386"/>
    </location>
</feature>
<feature type="transmembrane region" description="Helical; Name=S1" evidence="13 20 21">
    <location>
        <begin position="387"/>
        <end position="404"/>
    </location>
</feature>
<feature type="topological domain" description="Extracellular" evidence="13 20 21">
    <location>
        <begin position="405"/>
        <end position="422"/>
    </location>
</feature>
<feature type="transmembrane region" description="Helical; Name=S2" evidence="13 20 21">
    <location>
        <begin position="423"/>
        <end position="439"/>
    </location>
</feature>
<feature type="topological domain" description="Cytoplasmic" evidence="13 20 21">
    <location>
        <begin position="440"/>
        <end position="455"/>
    </location>
</feature>
<feature type="transmembrane region" description="Helical; Name=S3" evidence="13 20 21">
    <location>
        <begin position="456"/>
        <end position="475"/>
    </location>
</feature>
<feature type="topological domain" description="Extracellular" evidence="13 19 20 21">
    <location>
        <begin position="476"/>
        <end position="496"/>
    </location>
</feature>
<feature type="transmembrane region" description="Helical; Name=S4" evidence="13 20 21">
    <location>
        <begin position="497"/>
        <end position="517"/>
    </location>
</feature>
<feature type="topological domain" description="Cytoplasmic" evidence="13 20 21">
    <location>
        <begin position="518"/>
        <end position="536"/>
    </location>
</feature>
<feature type="transmembrane region" description="Helical; Name=S5" evidence="13 20 21">
    <location>
        <begin position="537"/>
        <end position="558"/>
    </location>
</feature>
<feature type="topological domain" description="Extracellular" evidence="13 20 21">
    <location>
        <begin position="559"/>
        <end position="623"/>
    </location>
</feature>
<feature type="transmembrane region" description="Helical; Name=S6" evidence="13 20 21">
    <location>
        <begin position="624"/>
        <end position="644"/>
    </location>
</feature>
<feature type="topological domain" description="Cytoplasmic" evidence="13 20 21">
    <location>
        <begin position="645"/>
        <end position="793"/>
    </location>
</feature>
<feature type="repeat" description="ANK 1" evidence="13 20 21">
    <location>
        <begin position="46"/>
        <end position="75"/>
    </location>
</feature>
<feature type="repeat" description="ANK 2" evidence="13 20 21">
    <location>
        <begin position="83"/>
        <end position="109"/>
    </location>
</feature>
<feature type="repeat" description="ANK 3" evidence="13 20 21">
    <location>
        <begin position="111"/>
        <end position="156"/>
    </location>
</feature>
<feature type="repeat" description="ANK 4" evidence="13 20 21">
    <location>
        <begin position="158"/>
        <end position="180"/>
    </location>
</feature>
<feature type="region of interest" description="Disordered" evidence="2">
    <location>
        <begin position="1"/>
        <end position="30"/>
    </location>
</feature>
<feature type="compositionally biased region" description="Low complexity" evidence="2">
    <location>
        <begin position="15"/>
        <end position="28"/>
    </location>
</feature>
<feature type="binding site" evidence="13 20 21">
    <location>
        <position position="189"/>
    </location>
    <ligand>
        <name>Zn(2+)</name>
        <dbReference type="ChEBI" id="CHEBI:29105"/>
    </ligand>
</feature>
<feature type="binding site" evidence="13 20 21">
    <location>
        <position position="193"/>
    </location>
    <ligand>
        <name>Zn(2+)</name>
        <dbReference type="ChEBI" id="CHEBI:29105"/>
    </ligand>
</feature>
<feature type="binding site" evidence="13 20 21">
    <location>
        <position position="195"/>
    </location>
    <ligand>
        <name>Zn(2+)</name>
        <dbReference type="ChEBI" id="CHEBI:29105"/>
    </ligand>
</feature>
<feature type="binding site" evidence="13 20 21">
    <location>
        <position position="198"/>
    </location>
    <ligand>
        <name>Zn(2+)</name>
        <dbReference type="ChEBI" id="CHEBI:29105"/>
    </ligand>
</feature>
<feature type="disulfide bond" evidence="20 21">
    <location>
        <begin position="571"/>
        <end position="576"/>
    </location>
</feature>
<feature type="splice variant" id="VSP_006560" description="In isoform Short." evidence="16 17 18">
    <location>
        <begin position="110"/>
        <end position="143"/>
    </location>
</feature>
<feature type="mutagenesis site" description="Decreases permeability to calcium ions and increases permeability to cesium ions." evidence="13">
    <original>L</original>
    <variation>G</variation>
    <location>
        <position position="601"/>
    </location>
</feature>
<feature type="mutagenesis site" description="Decreases permeability to calcium ions and increases permeability to cesium ions." evidence="13">
    <original>H</original>
    <variation>N</variation>
    <location>
        <position position="646"/>
    </location>
</feature>
<feature type="mutagenesis site" description="Decreases permeability to calcium ions." evidence="13">
    <original>K</original>
    <variation>N</variation>
    <location>
        <position position="647"/>
    </location>
</feature>
<feature type="strand" evidence="22">
    <location>
        <begin position="31"/>
        <end position="33"/>
    </location>
</feature>
<feature type="helix" evidence="22">
    <location>
        <begin position="46"/>
        <end position="55"/>
    </location>
</feature>
<feature type="turn" evidence="22">
    <location>
        <begin position="56"/>
        <end position="58"/>
    </location>
</feature>
<feature type="helix" evidence="22">
    <location>
        <begin position="60"/>
        <end position="72"/>
    </location>
</feature>
<feature type="helix" evidence="22">
    <location>
        <begin position="87"/>
        <end position="93"/>
    </location>
</feature>
<feature type="helix" evidence="22">
    <location>
        <begin position="97"/>
        <end position="105"/>
    </location>
</feature>
<feature type="helix" evidence="22">
    <location>
        <begin position="113"/>
        <end position="119"/>
    </location>
</feature>
<feature type="helix" evidence="22">
    <location>
        <begin position="123"/>
        <end position="129"/>
    </location>
</feature>
<feature type="helix" evidence="22">
    <location>
        <begin position="162"/>
        <end position="169"/>
    </location>
</feature>
<feature type="helix" evidence="22">
    <location>
        <begin position="172"/>
        <end position="178"/>
    </location>
</feature>
<feature type="strand" evidence="22">
    <location>
        <begin position="179"/>
        <end position="181"/>
    </location>
</feature>
<feature type="strand" evidence="22">
    <location>
        <begin position="183"/>
        <end position="186"/>
    </location>
</feature>
<feature type="helix" evidence="22">
    <location>
        <begin position="198"/>
        <end position="220"/>
    </location>
</feature>
<feature type="helix" evidence="22">
    <location>
        <begin position="223"/>
        <end position="228"/>
    </location>
</feature>
<feature type="helix" evidence="22">
    <location>
        <begin position="233"/>
        <end position="250"/>
    </location>
</feature>
<feature type="helix" evidence="22">
    <location>
        <begin position="255"/>
        <end position="273"/>
    </location>
</feature>
<feature type="helix" evidence="22">
    <location>
        <begin position="279"/>
        <end position="286"/>
    </location>
</feature>
<feature type="helix" evidence="22">
    <location>
        <begin position="308"/>
        <end position="315"/>
    </location>
</feature>
<feature type="helix" evidence="22">
    <location>
        <begin position="319"/>
        <end position="322"/>
    </location>
</feature>
<feature type="helix" evidence="22">
    <location>
        <begin position="325"/>
        <end position="336"/>
    </location>
</feature>
<feature type="helix" evidence="22">
    <location>
        <begin position="340"/>
        <end position="342"/>
    </location>
</feature>
<feature type="helix" evidence="22">
    <location>
        <begin position="347"/>
        <end position="359"/>
    </location>
</feature>
<feature type="helix" evidence="22">
    <location>
        <begin position="361"/>
        <end position="370"/>
    </location>
</feature>
<feature type="strand" evidence="22">
    <location>
        <begin position="372"/>
        <end position="374"/>
    </location>
</feature>
<feature type="helix" evidence="22">
    <location>
        <begin position="375"/>
        <end position="377"/>
    </location>
</feature>
<feature type="turn" evidence="22">
    <location>
        <begin position="378"/>
        <end position="381"/>
    </location>
</feature>
<feature type="helix" evidence="22">
    <location>
        <begin position="383"/>
        <end position="407"/>
    </location>
</feature>
<feature type="turn" evidence="22">
    <location>
        <begin position="409"/>
        <end position="411"/>
    </location>
</feature>
<feature type="turn" evidence="23">
    <location>
        <begin position="412"/>
        <end position="414"/>
    </location>
</feature>
<feature type="helix" evidence="22">
    <location>
        <begin position="422"/>
        <end position="444"/>
    </location>
</feature>
<feature type="helix" evidence="22">
    <location>
        <begin position="448"/>
        <end position="452"/>
    </location>
</feature>
<feature type="helix" evidence="22">
    <location>
        <begin position="454"/>
        <end position="479"/>
    </location>
</feature>
<feature type="helix" evidence="22">
    <location>
        <begin position="486"/>
        <end position="488"/>
    </location>
</feature>
<feature type="helix" evidence="22">
    <location>
        <begin position="494"/>
        <end position="511"/>
    </location>
</feature>
<feature type="helix" evidence="22">
    <location>
        <begin position="512"/>
        <end position="516"/>
    </location>
</feature>
<feature type="turn" evidence="22">
    <location>
        <begin position="521"/>
        <end position="523"/>
    </location>
</feature>
<feature type="helix" evidence="22">
    <location>
        <begin position="524"/>
        <end position="559"/>
    </location>
</feature>
<feature type="strand" evidence="22">
    <location>
        <begin position="573"/>
        <end position="578"/>
    </location>
</feature>
<feature type="helix" evidence="22">
    <location>
        <begin position="581"/>
        <end position="585"/>
    </location>
</feature>
<feature type="helix" evidence="22">
    <location>
        <begin position="587"/>
        <end position="595"/>
    </location>
</feature>
<feature type="turn" evidence="23">
    <location>
        <begin position="596"/>
        <end position="599"/>
    </location>
</feature>
<feature type="strand" evidence="22">
    <location>
        <begin position="601"/>
        <end position="604"/>
    </location>
</feature>
<feature type="helix" evidence="22">
    <location>
        <begin position="606"/>
        <end position="609"/>
    </location>
</feature>
<feature type="helix" evidence="22">
    <location>
        <begin position="616"/>
        <end position="634"/>
    </location>
</feature>
<feature type="helix" evidence="22">
    <location>
        <begin position="637"/>
        <end position="652"/>
    </location>
</feature>
<feature type="helix" evidence="23">
    <location>
        <begin position="653"/>
        <end position="655"/>
    </location>
</feature>
<feature type="helix" evidence="22">
    <location>
        <begin position="656"/>
        <end position="672"/>
    </location>
</feature>
<feature type="strand" evidence="22">
    <location>
        <begin position="674"/>
        <end position="676"/>
    </location>
</feature>
<feature type="turn" evidence="23">
    <location>
        <begin position="680"/>
        <end position="682"/>
    </location>
</feature>
<feature type="helix" evidence="22">
    <location>
        <begin position="722"/>
        <end position="753"/>
    </location>
</feature>
<feature type="helix" evidence="22">
    <location>
        <begin position="758"/>
        <end position="778"/>
    </location>
</feature>
<comment type="function">
    <text evidence="4 6 13">Forms a receptor-activated non-selective calcium permeant cation channel (PubMed:11139478, PubMed:15016832, PubMed:39478185). Forms a heteromeric ion channel with TRPC4 or TRPC5 that has reduced calcium permeability compared to the homomeric TRPC4 or TRPC5 channel (PubMed:39478185). Also permeable to monovalent ions including sodium, lithium and cesium ions (PubMed:39478185).</text>
</comment>
<comment type="function">
    <molecule>Isoform Short</molecule>
    <text evidence="14">Forms a receptor-activated non-selective calcium permeant cation channel. Also activated by intracellular calcium store depletion.</text>
</comment>
<comment type="catalytic activity">
    <reaction evidence="4 6 13">
        <text>Ca(2+)(in) = Ca(2+)(out)</text>
        <dbReference type="Rhea" id="RHEA:29671"/>
        <dbReference type="ChEBI" id="CHEBI:29108"/>
    </reaction>
</comment>
<comment type="catalytic activity">
    <reaction evidence="13 14">
        <text>Na(+)(in) = Na(+)(out)</text>
        <dbReference type="Rhea" id="RHEA:34963"/>
        <dbReference type="ChEBI" id="CHEBI:29101"/>
    </reaction>
</comment>
<comment type="catalytic activity">
    <reaction evidence="13">
        <text>Li(+)(in) = Li(+)(out)</text>
        <dbReference type="Rhea" id="RHEA:78551"/>
        <dbReference type="ChEBI" id="CHEBI:49713"/>
    </reaction>
</comment>
<comment type="catalytic activity">
    <reaction evidence="13">
        <text>Cs(+)(in) = Cs(+)(out)</text>
        <dbReference type="Rhea" id="RHEA:78555"/>
        <dbReference type="ChEBI" id="CHEBI:49547"/>
    </reaction>
</comment>
<comment type="catalytic activity">
    <molecule>Isoform Short</molecule>
    <reaction evidence="14">
        <text>Ca(2+)(in) = Ca(2+)(out)</text>
        <dbReference type="Rhea" id="RHEA:29671"/>
        <dbReference type="ChEBI" id="CHEBI:29108"/>
    </reaction>
</comment>
<comment type="catalytic activity">
    <molecule>Isoform Short</molecule>
    <reaction evidence="14">
        <text>Na(+)(in) = Na(+)(out)</text>
        <dbReference type="Rhea" id="RHEA:34963"/>
        <dbReference type="ChEBI" id="CHEBI:29101"/>
    </reaction>
</comment>
<comment type="activity regulation">
    <text evidence="6 13 14">May be operated by a phosphatidylinositol second messenger system activated by receptor tyrosine kinases or G-protein coupled receptors (PubMed:15016832). Also activated by intracellular calcium store depletion (PubMed:8663995). Inhibited by xanthine-based inhibitor Pico145 (PubMed:39478185).</text>
</comment>
<comment type="subunit">
    <text evidence="1 3 5 7 8 9 10 11 12 13">Heterotetramer with TRPC4 and/or TRPC5 (PubMed:12032305, PubMed:39478185). Forms a heteromeric ion channel with TRPC4, with a 1:3 TRPC1:TRPC4 stoichiometry (PubMed:39478185). Unlike other TRP channel proteins, does not form a homomeric channel (PubMed:12032305, PubMed:39478185). Interacts with TRPC4AP (By similarity). Interacts with ITPR3 (PubMed:10766822). Interacts with MX1 and RNF24 (PubMed:15757897, PubMed:17850865). Interacts with FKBP4 (PubMed:19945390). Interacts with PLSCR1 (By similarity). Interacts with PKD2L2 (PubMed:16883570). Forms a heterotetramer with PKD2 with a 2:2 stoichiometry; has distinct channel properties separate from PKD2 or TRPC1 homomers alone (PubMed:19193631, PubMed:19850920).</text>
</comment>
<comment type="subunit">
    <molecule>Isoform Short</molecule>
    <text evidence="15">Interacts with isoform 2 of TRPC3.</text>
</comment>
<comment type="interaction">
    <interactant intactId="EBI-929665">
        <id>P48995</id>
    </interactant>
    <interactant intactId="EBI-603614">
        <id>Q03135</id>
        <label>CAV1</label>
    </interactant>
    <organismsDiffer>false</organismsDiffer>
    <experiments>7</experiments>
</comment>
<comment type="interaction">
    <interactant intactId="EBI-929665">
        <id>P48995</id>
    </interactant>
    <interactant intactId="EBI-2291476">
        <id>Q96D31</id>
        <label>ORAI1</label>
    </interactant>
    <organismsDiffer>false</organismsDiffer>
    <experiments>2</experiments>
</comment>
<comment type="interaction">
    <interactant intactId="EBI-929665">
        <id>P48995</id>
    </interactant>
    <interactant intactId="EBI-7813714">
        <id>Q13563</id>
        <label>PKD2</label>
    </interactant>
    <organismsDiffer>false</organismsDiffer>
    <experiments>12</experiments>
</comment>
<comment type="interaction">
    <interactant intactId="EBI-929665">
        <id>P48995</id>
    </interactant>
    <interactant intactId="EBI-448878">
        <id>Q13586</id>
        <label>STIM1</label>
    </interactant>
    <organismsDiffer>false</organismsDiffer>
    <experiments>6</experiments>
</comment>
<comment type="interaction">
    <interactant intactId="EBI-929665">
        <id>P48995</id>
    </interactant>
    <interactant intactId="EBI-7091763">
        <id>Q9EPK8</id>
        <label>Trpv4</label>
    </interactant>
    <organismsDiffer>true</organismsDiffer>
    <experiments>10</experiments>
</comment>
<comment type="interaction">
    <interactant intactId="EBI-9830970">
        <id>P48995-2</id>
    </interactant>
    <interactant intactId="EBI-7813714">
        <id>Q13563</id>
        <label>PKD2</label>
    </interactant>
    <organismsDiffer>false</organismsDiffer>
    <experiments>4</experiments>
</comment>
<comment type="subcellular location">
    <subcellularLocation>
        <location evidence="4">Cell membrane</location>
        <topology evidence="13">Multi-pass membrane protein</topology>
    </subcellularLocation>
</comment>
<comment type="alternative products">
    <event type="alternative splicing"/>
    <isoform>
        <id>P48995-1</id>
        <name>Long</name>
        <sequence type="displayed"/>
    </isoform>
    <isoform>
        <id>P48995-2</id>
        <name>Short</name>
        <name evidence="18">TRPC1A</name>
        <sequence type="described" ref="VSP_006560"/>
    </isoform>
</comment>
<comment type="tissue specificity">
    <text>Seems to be ubiquitous.</text>
</comment>
<comment type="PTM">
    <text evidence="6">Activation of PRKCA induces phosphorylation of TRPC1 and subsequent Ca2+ entry into cells.</text>
</comment>
<comment type="similarity">
    <text evidence="19">Belongs to the transient receptor (TC 1.A.4) family. STrpC subfamily. TRPC1 sub-subfamily.</text>
</comment>
<dbReference type="EMBL" id="U31110">
    <property type="protein sequence ID" value="AAA93251.1"/>
    <property type="molecule type" value="mRNA"/>
</dbReference>
<dbReference type="EMBL" id="U31110">
    <property type="protein sequence ID" value="AAA93252.1"/>
    <property type="molecule type" value="mRNA"/>
</dbReference>
<dbReference type="EMBL" id="X89066">
    <property type="protein sequence ID" value="CAA61447.1"/>
    <property type="molecule type" value="mRNA"/>
</dbReference>
<dbReference type="EMBL" id="Z73903">
    <property type="protein sequence ID" value="CAA98108.1"/>
    <property type="molecule type" value="mRNA"/>
</dbReference>
<dbReference type="EMBL" id="CH471052">
    <property type="protein sequence ID" value="EAW78963.1"/>
    <property type="molecule type" value="Genomic_DNA"/>
</dbReference>
<dbReference type="EMBL" id="BC112338">
    <property type="protein sequence ID" value="AAI12339.1"/>
    <property type="molecule type" value="mRNA"/>
</dbReference>
<dbReference type="EMBL" id="BC113953">
    <property type="protein sequence ID" value="AAI13954.1"/>
    <property type="molecule type" value="mRNA"/>
</dbReference>
<dbReference type="CCDS" id="CCDS3126.1">
    <molecule id="P48995-2"/>
</dbReference>
<dbReference type="CCDS" id="CCDS58856.1">
    <molecule id="P48995-1"/>
</dbReference>
<dbReference type="PIR" id="S68238">
    <property type="entry name" value="S68238"/>
</dbReference>
<dbReference type="RefSeq" id="NP_001238774.1">
    <molecule id="P48995-1"/>
    <property type="nucleotide sequence ID" value="NM_001251845.2"/>
</dbReference>
<dbReference type="RefSeq" id="NP_003295.1">
    <molecule id="P48995-2"/>
    <property type="nucleotide sequence ID" value="NM_003304.5"/>
</dbReference>
<dbReference type="PDB" id="8WPL">
    <property type="method" value="EM"/>
    <property type="resolution" value="3.04 A"/>
    <property type="chains" value="A=1-793"/>
</dbReference>
<dbReference type="PDB" id="8WPM">
    <property type="method" value="EM"/>
    <property type="resolution" value="3.43 A"/>
    <property type="chains" value="A=1-793"/>
</dbReference>
<dbReference type="PDBsum" id="8WPL"/>
<dbReference type="PDBsum" id="8WPM"/>
<dbReference type="EMDB" id="EMD-37718"/>
<dbReference type="EMDB" id="EMD-37719"/>
<dbReference type="SMR" id="P48995"/>
<dbReference type="BioGRID" id="113071">
    <property type="interactions" value="25"/>
</dbReference>
<dbReference type="ComplexPortal" id="CPX-25762">
    <property type="entry name" value="Short transient receptor potential channel complex,TRPC1-TRPC4 variant"/>
</dbReference>
<dbReference type="ComplexPortal" id="CPX-25765">
    <property type="entry name" value="Short transient receptor potential channel complex, TRPC1-TRPC5 variant"/>
</dbReference>
<dbReference type="ComplexPortal" id="CPX-25775">
    <property type="entry name" value="Short transient receptor potential channel complex,TRPC1-TRPC4-TRPC5 variant"/>
</dbReference>
<dbReference type="CORUM" id="P48995"/>
<dbReference type="DIP" id="DIP-35698N"/>
<dbReference type="FunCoup" id="P48995">
    <property type="interactions" value="244"/>
</dbReference>
<dbReference type="IntAct" id="P48995">
    <property type="interactions" value="44"/>
</dbReference>
<dbReference type="STRING" id="9606.ENSP00000419313"/>
<dbReference type="BindingDB" id="P48995"/>
<dbReference type="ChEMBL" id="CHEMBL4296083"/>
<dbReference type="ChEMBL" id="CHEMBL4523660"/>
<dbReference type="ChEMBL" id="CHEMBL4523661"/>
<dbReference type="TCDB" id="1.A.4.1.3">
    <property type="family name" value="the transient receptor potential ca2+/cation channel (trp-cc) family"/>
</dbReference>
<dbReference type="iPTMnet" id="P48995"/>
<dbReference type="PhosphoSitePlus" id="P48995"/>
<dbReference type="SwissPalm" id="P48995"/>
<dbReference type="BioMuta" id="TRPC1"/>
<dbReference type="DMDM" id="1351302"/>
<dbReference type="jPOST" id="P48995"/>
<dbReference type="MassIVE" id="P48995"/>
<dbReference type="PaxDb" id="9606-ENSP00000419313"/>
<dbReference type="PeptideAtlas" id="P48995"/>
<dbReference type="ProteomicsDB" id="55952">
    <molecule id="P48995-1"/>
</dbReference>
<dbReference type="ProteomicsDB" id="55953">
    <molecule id="P48995-2"/>
</dbReference>
<dbReference type="ABCD" id="P48995">
    <property type="antibodies" value="3 sequenced antibodies"/>
</dbReference>
<dbReference type="Antibodypedia" id="3996">
    <property type="antibodies" value="267 antibodies from 34 providers"/>
</dbReference>
<dbReference type="DNASU" id="7220"/>
<dbReference type="Ensembl" id="ENST00000273482.10">
    <molecule id="P48995-2"/>
    <property type="protein sequence ID" value="ENSP00000273482.6"/>
    <property type="gene ID" value="ENSG00000144935.17"/>
</dbReference>
<dbReference type="Ensembl" id="ENST00000476941.6">
    <molecule id="P48995-1"/>
    <property type="protein sequence ID" value="ENSP00000419313.1"/>
    <property type="gene ID" value="ENSG00000144935.17"/>
</dbReference>
<dbReference type="GeneID" id="7220"/>
<dbReference type="KEGG" id="hsa:7220"/>
<dbReference type="MANE-Select" id="ENST00000476941.6">
    <property type="protein sequence ID" value="ENSP00000419313.1"/>
    <property type="RefSeq nucleotide sequence ID" value="NM_001251845.2"/>
    <property type="RefSeq protein sequence ID" value="NP_001238774.1"/>
</dbReference>
<dbReference type="UCSC" id="uc003evb.4">
    <molecule id="P48995-1"/>
    <property type="organism name" value="human"/>
</dbReference>
<dbReference type="AGR" id="HGNC:12333"/>
<dbReference type="CTD" id="7220"/>
<dbReference type="DisGeNET" id="7220"/>
<dbReference type="GeneCards" id="TRPC1"/>
<dbReference type="HGNC" id="HGNC:12333">
    <property type="gene designation" value="TRPC1"/>
</dbReference>
<dbReference type="HPA" id="ENSG00000144935">
    <property type="expression patterns" value="Low tissue specificity"/>
</dbReference>
<dbReference type="MIM" id="602343">
    <property type="type" value="gene"/>
</dbReference>
<dbReference type="neXtProt" id="NX_P48995"/>
<dbReference type="OpenTargets" id="ENSG00000144935"/>
<dbReference type="PharmGKB" id="PA357"/>
<dbReference type="VEuPathDB" id="HostDB:ENSG00000144935"/>
<dbReference type="eggNOG" id="KOG3609">
    <property type="taxonomic scope" value="Eukaryota"/>
</dbReference>
<dbReference type="GeneTree" id="ENSGT01060000248594"/>
<dbReference type="HOGENOM" id="CLU_005716_4_1_1"/>
<dbReference type="InParanoid" id="P48995"/>
<dbReference type="OMA" id="SRPTIVX"/>
<dbReference type="OrthoDB" id="2373987at2759"/>
<dbReference type="PAN-GO" id="P48995">
    <property type="GO annotations" value="7 GO annotations based on evolutionary models"/>
</dbReference>
<dbReference type="PhylomeDB" id="P48995"/>
<dbReference type="TreeFam" id="TF313147"/>
<dbReference type="PathwayCommons" id="P48995"/>
<dbReference type="Reactome" id="R-HSA-3295583">
    <property type="pathway name" value="TRP channels"/>
</dbReference>
<dbReference type="Reactome" id="R-HSA-418890">
    <property type="pathway name" value="Role of second messengers in netrin-1 signaling"/>
</dbReference>
<dbReference type="Reactome" id="R-HSA-5578775">
    <property type="pathway name" value="Ion homeostasis"/>
</dbReference>
<dbReference type="Reactome" id="R-HSA-983695">
    <property type="pathway name" value="Antigen activates B Cell Receptor (BCR) leading to generation of second messengers"/>
</dbReference>
<dbReference type="SignaLink" id="P48995"/>
<dbReference type="BioGRID-ORCS" id="7220">
    <property type="hits" value="11 hits in 1161 CRISPR screens"/>
</dbReference>
<dbReference type="ChiTaRS" id="TRPC1">
    <property type="organism name" value="human"/>
</dbReference>
<dbReference type="GeneWiki" id="TRPC1"/>
<dbReference type="GenomeRNAi" id="7220"/>
<dbReference type="Pharos" id="P48995">
    <property type="development level" value="Tbio"/>
</dbReference>
<dbReference type="PRO" id="PR:P48995"/>
<dbReference type="Proteomes" id="UP000005640">
    <property type="component" value="Chromosome 3"/>
</dbReference>
<dbReference type="RNAct" id="P48995">
    <property type="molecule type" value="protein"/>
</dbReference>
<dbReference type="Bgee" id="ENSG00000144935">
    <property type="expression patterns" value="Expressed in germinal epithelium of ovary and 185 other cell types or tissues"/>
</dbReference>
<dbReference type="ExpressionAtlas" id="P48995">
    <property type="expression patterns" value="baseline and differential"/>
</dbReference>
<dbReference type="GO" id="GO:0034703">
    <property type="term" value="C:cation channel complex"/>
    <property type="evidence" value="ECO:0000318"/>
    <property type="project" value="GO_Central"/>
</dbReference>
<dbReference type="GO" id="GO:0005886">
    <property type="term" value="C:plasma membrane"/>
    <property type="evidence" value="ECO:0000314"/>
    <property type="project" value="BHF-UCL"/>
</dbReference>
<dbReference type="GO" id="GO:0043235">
    <property type="term" value="C:receptor complex"/>
    <property type="evidence" value="ECO:0000314"/>
    <property type="project" value="MGI"/>
</dbReference>
<dbReference type="GO" id="GO:0051117">
    <property type="term" value="F:ATPase binding"/>
    <property type="evidence" value="ECO:0000353"/>
    <property type="project" value="ARUK-UCL"/>
</dbReference>
<dbReference type="GO" id="GO:0005262">
    <property type="term" value="F:calcium channel activity"/>
    <property type="evidence" value="ECO:0000304"/>
    <property type="project" value="Reactome"/>
</dbReference>
<dbReference type="GO" id="GO:0070679">
    <property type="term" value="F:inositol 1,4,5 trisphosphate binding"/>
    <property type="evidence" value="ECO:0000314"/>
    <property type="project" value="BHF-UCL"/>
</dbReference>
<dbReference type="GO" id="GO:0005261">
    <property type="term" value="F:monoatomic cation channel activity"/>
    <property type="evidence" value="ECO:0000269"/>
    <property type="project" value="Reactome"/>
</dbReference>
<dbReference type="GO" id="GO:0005102">
    <property type="term" value="F:signaling receptor binding"/>
    <property type="evidence" value="ECO:0000353"/>
    <property type="project" value="ARUK-UCL"/>
</dbReference>
<dbReference type="GO" id="GO:0015279">
    <property type="term" value="F:store-operated calcium channel activity"/>
    <property type="evidence" value="ECO:0000314"/>
    <property type="project" value="UniProtKB"/>
</dbReference>
<dbReference type="GO" id="GO:0044325">
    <property type="term" value="F:transmembrane transporter binding"/>
    <property type="evidence" value="ECO:0000353"/>
    <property type="project" value="BHF-UCL"/>
</dbReference>
<dbReference type="GO" id="GO:0070588">
    <property type="term" value="P:calcium ion transmembrane transport"/>
    <property type="evidence" value="ECO:0000318"/>
    <property type="project" value="GO_Central"/>
</dbReference>
<dbReference type="GO" id="GO:0006816">
    <property type="term" value="P:calcium ion transport"/>
    <property type="evidence" value="ECO:0000304"/>
    <property type="project" value="ProtInc"/>
</dbReference>
<dbReference type="GO" id="GO:0042438">
    <property type="term" value="P:melanin biosynthetic process"/>
    <property type="evidence" value="ECO:0000314"/>
    <property type="project" value="CACAO"/>
</dbReference>
<dbReference type="GO" id="GO:0051281">
    <property type="term" value="P:positive regulation of release of sequestered calcium ion into cytosol"/>
    <property type="evidence" value="ECO:0000314"/>
    <property type="project" value="BHF-UCL"/>
</dbReference>
<dbReference type="GO" id="GO:1903779">
    <property type="term" value="P:regulation of cardiac conduction"/>
    <property type="evidence" value="ECO:0000304"/>
    <property type="project" value="Reactome"/>
</dbReference>
<dbReference type="GO" id="GO:0051480">
    <property type="term" value="P:regulation of cytosolic calcium ion concentration"/>
    <property type="evidence" value="ECO:0000314"/>
    <property type="project" value="BHF-UCL"/>
</dbReference>
<dbReference type="GO" id="GO:0051592">
    <property type="term" value="P:response to calcium ion"/>
    <property type="evidence" value="ECO:0000314"/>
    <property type="project" value="BHF-UCL"/>
</dbReference>
<dbReference type="FunFam" id="1.25.40.20:FF:000088">
    <property type="entry name" value="short transient receptor potential channel 1 isoform X1"/>
    <property type="match status" value="1"/>
</dbReference>
<dbReference type="Gene3D" id="1.25.40.20">
    <property type="entry name" value="Ankyrin repeat-containing domain"/>
    <property type="match status" value="1"/>
</dbReference>
<dbReference type="InterPro" id="IPR002110">
    <property type="entry name" value="Ankyrin_rpt"/>
</dbReference>
<dbReference type="InterPro" id="IPR036770">
    <property type="entry name" value="Ankyrin_rpt-contain_sf"/>
</dbReference>
<dbReference type="InterPro" id="IPR005821">
    <property type="entry name" value="Ion_trans_dom"/>
</dbReference>
<dbReference type="InterPro" id="IPR013555">
    <property type="entry name" value="TRP_dom"/>
</dbReference>
<dbReference type="InterPro" id="IPR005457">
    <property type="entry name" value="TRPC1_channel"/>
</dbReference>
<dbReference type="InterPro" id="IPR002153">
    <property type="entry name" value="TRPC_channel"/>
</dbReference>
<dbReference type="NCBIfam" id="TIGR00870">
    <property type="entry name" value="trp"/>
    <property type="match status" value="1"/>
</dbReference>
<dbReference type="PANTHER" id="PTHR10117:SF56">
    <property type="entry name" value="SHORT TRANSIENT RECEPTOR POTENTIAL CHANNEL 1"/>
    <property type="match status" value="1"/>
</dbReference>
<dbReference type="PANTHER" id="PTHR10117">
    <property type="entry name" value="TRANSIENT RECEPTOR POTENTIAL CHANNEL"/>
    <property type="match status" value="1"/>
</dbReference>
<dbReference type="Pfam" id="PF00520">
    <property type="entry name" value="Ion_trans"/>
    <property type="match status" value="1"/>
</dbReference>
<dbReference type="Pfam" id="PF08344">
    <property type="entry name" value="TRP_2"/>
    <property type="match status" value="1"/>
</dbReference>
<dbReference type="PRINTS" id="PR01097">
    <property type="entry name" value="TRNSRECEPTRP"/>
</dbReference>
<dbReference type="PRINTS" id="PR01642">
    <property type="entry name" value="TRPCHANNEL1"/>
</dbReference>
<dbReference type="SMART" id="SM00248">
    <property type="entry name" value="ANK"/>
    <property type="match status" value="3"/>
</dbReference>
<dbReference type="SMART" id="SM01420">
    <property type="entry name" value="TRP_2"/>
    <property type="match status" value="1"/>
</dbReference>
<dbReference type="SUPFAM" id="SSF48403">
    <property type="entry name" value="Ankyrin repeat"/>
    <property type="match status" value="1"/>
</dbReference>
<organism>
    <name type="scientific">Homo sapiens</name>
    <name type="common">Human</name>
    <dbReference type="NCBI Taxonomy" id="9606"/>
    <lineage>
        <taxon>Eukaryota</taxon>
        <taxon>Metazoa</taxon>
        <taxon>Chordata</taxon>
        <taxon>Craniata</taxon>
        <taxon>Vertebrata</taxon>
        <taxon>Euteleostomi</taxon>
        <taxon>Mammalia</taxon>
        <taxon>Eutheria</taxon>
        <taxon>Euarchontoglires</taxon>
        <taxon>Primates</taxon>
        <taxon>Haplorrhini</taxon>
        <taxon>Catarrhini</taxon>
        <taxon>Hominidae</taxon>
        <taxon>Homo</taxon>
    </lineage>
</organism>